<gene>
    <name type="primary">POLD2</name>
</gene>
<sequence>MFSEQAAQRAHTLLSPPSASNATFARVPVVTYTNSSQPFRLGERSFSRQYAHIYATRLIQMRPFLVSRAQQRWGSGVLVKKLCELQPGEKCCVVGTLFKAMPLQPSILREVSEEHNLLPQPPRSKYIHPDDELILEDELQRIKLEGTIDVSKLVTGTVLAVLGSAGDDGKFLVEDHCFAGLAPQKPACPLDTDRFVLLVSGLGLGGGGGESLLGTQLLVDVVTGQLGDEGEQCSAAHVSRVILAGNLLSHNTQSRDSINKAKYLTKKTQAASVEAVKMLDEILLQLSASVPVDVMPGEFDPTNYTLPQQPLHPCMFPLATAYSTLQLVTNPYQATIDGVRFLGTSGQNVSDIFRYSSMEDHLEILEWTLQVRHISPTAPDTLGCYPFYKTDPFIFPECPHVYFCGNTPSFGSKIIQGPEDQTVLLVAVPDFSTTQTACLVNLRSLACQPISFSGFGAEDEDLGGLGLGP</sequence>
<keyword id="KW-0007">Acetylation</keyword>
<keyword id="KW-0903">Direct protein sequencing</keyword>
<keyword id="KW-0227">DNA damage</keyword>
<keyword id="KW-0228">DNA excision</keyword>
<keyword id="KW-0234">DNA repair</keyword>
<keyword id="KW-0235">DNA replication</keyword>
<keyword id="KW-0539">Nucleus</keyword>
<keyword id="KW-0597">Phosphoprotein</keyword>
<keyword id="KW-1185">Reference proteome</keyword>
<accession>P49004</accession>
<accession>Q29RZ3</accession>
<comment type="function">
    <text evidence="1">Accessory component of both the DNA polymerase delta complex and the DNA polymerase zeta complex. As a component of the trimeric and tetrameric DNA polymerase delta complexes (Pol-delta3 and Pol-delta4, respectively), plays a role in high fidelity genome replication, including in lagging strand synthesis, and repair. Pol-delta3 and Pol-delta4 are characterized by the absence or the presence of POLD4. They exhibit differences in catalytic activity. Most notably, Pol-delta3 shows higher proofreading activity than Pol-delta4. Although both Pol-delta3 and Pol-delta4 process Okazaki fragments in vitro, Pol-delta3 may also be better suited to fulfill this task, exhibiting near-absence of strand displacement activity compared to Pol-delta4 and stalling on encounter with the 5'-blocking oligonucleotides. Pol-delta3 idling process may avoid the formation of a gap, while maintaining a nick that can be readily ligated. Along with DNA polymerase kappa, DNA polymerase delta carries out approximately half of nucleotide excision repair (NER) synthesis following UV irradiation. Under conditions of DNA replication stress, required for the repair of broken replication forks through break-induced replication (BIR). Involved in the translesion synthesis (TLS) of templates carrying O6-methylguanine or abasic sites performed by Pol-delta4, independently of DNA polymerase zeta (REV3L) or eta (POLH). Facilitates abasic site bypass by DNA polymerase delta by promoting extension from the nucleotide inserted opposite the lesion. Also involved in TLS as a component of the DNA polymerase zeta complex. Along with POLD3, dramatically increases the efficiency and processivity of DNA synthesis of the DNA polymerase zeta complex compared to the minimal zeta complex, consisting of only REV3L and REV7.</text>
</comment>
<comment type="subunit">
    <text evidence="1 2">Component of both the DNA polymerase delta and DNA polymerase zeta complexes. Component of the tetrameric DNA polymerase delta complex (Pol-delta4), which consists of POLD1/p125, POLD2/p50, POLD3/p66/p68 and POLD4/p12, with POLD1 bearing DNA polymerase and 3' to 5' proofreading exonuclease activities. Within Pol-delta4, directly interacts with POLD1, POLD3 and POLD4. Following stress caused by DNA damaging agents or by replication stress, POLD4 is degraded and Pol-delta4 is converted into a trimeric form of the complex (Pol-delta3), which consists of POLD1, POLD2 and POLD3. Pol-delta3 is the major form occurring at S phase replication sites, as well as DNA damage sites. Also observed as a dimeric complex with POLD2 (Pol-delta2 complex). Pol-delta2 is relatively insensitive to the PCNA stimulation (2-5-fold) compared to Pol-delta4 that is stimulated by over 50-fold. Contrary to the other components of Pol-delta4, does not directly interact with PCNA. As POLD1 and POLD4, directly interacts with WRNIP1; this interaction stimulates DNA polymerase delta-mediated DNA synthesis, independently of the presence of PCNA. This stimulation may be due predominantly to an increase of initiation frequency and also to increased processivity. Directly interacts with POLDIP2 and POLDIP3. Directly interacts with KCTD13/PDIP1; in the presence of PCNA, this interaction may stimulate DNA polymerase activity. Component of the tetrameric Pol-zeta complex (Pol-zeta4), which consists of REV3L, MAD2L2, POLD2 and POLD3, with REV3L bearing DNA polymerase catalytic activity (By similarity). Interacts with KCTD10 (By similarity).</text>
</comment>
<comment type="subcellular location">
    <subcellularLocation>
        <location evidence="1">Nucleus</location>
    </subcellularLocation>
    <text evidence="1">Recruited to DNA damage sites within 2 hours following UV irradiation.</text>
</comment>
<comment type="PTM">
    <text evidence="4">The N-terminus is blocked most probably through acetylation, as has been shown for the human ortholog.</text>
</comment>
<comment type="similarity">
    <text evidence="3">Belongs to the DNA polymerase delta/II small subunit family.</text>
</comment>
<name>DPOD2_BOVIN</name>
<reference key="1">
    <citation type="journal article" date="1995" name="Genomics">
        <title>Cloning of the cDNAs for the small subunits of bovine and human DNA polymerase delta and chromosomal location of the human gene (POLD2).</title>
        <authorList>
            <person name="Zhang J."/>
            <person name="Tan C.-K."/>
            <person name="McMullen B."/>
            <person name="Downey K.M."/>
            <person name="So A.G."/>
        </authorList>
    </citation>
    <scope>NUCLEOTIDE SEQUENCE [MRNA]</scope>
    <scope>PROTEIN SEQUENCE OF 5-40; 49-57; 62-80; 102-132; 146-162; 316-330; 341-354; 359-366 AND 444-459</scope>
    <scope>BLOCKED N-TERMINUS</scope>
    <source>
        <tissue>Thymus</tissue>
    </source>
</reference>
<reference key="2">
    <citation type="submission" date="2006-02" db="EMBL/GenBank/DDBJ databases">
        <authorList>
            <consortium name="NIH - Mammalian Gene Collection (MGC) project"/>
        </authorList>
    </citation>
    <scope>NUCLEOTIDE SEQUENCE [LARGE SCALE MRNA]</scope>
    <source>
        <strain>Hereford</strain>
        <tissue>Uterus</tissue>
    </source>
</reference>
<reference key="3">
    <citation type="journal article" date="2000" name="J. Biol. Chem.">
        <title>Identification of a fourth subunit of mammalian DNA polymerase delta.</title>
        <authorList>
            <person name="Liu L."/>
            <person name="Mo J.-Y."/>
            <person name="Rodriguez-Belmonte E.M."/>
            <person name="Lee M.Y.W.T."/>
        </authorList>
    </citation>
    <scope>PROTEIN SEQUENCE OF 100-109; 268-277 AND 341-354</scope>
    <scope>IDENTIFICATION IN POL-DELTA COMPLEX</scope>
    <scope>MASS SPECTROMETRY</scope>
    <source>
        <tissue>Thymus</tissue>
    </source>
</reference>
<dbReference type="EMBL" id="U21091">
    <property type="protein sequence ID" value="AAC48475.1"/>
    <property type="molecule type" value="mRNA"/>
</dbReference>
<dbReference type="EMBL" id="BC113315">
    <property type="protein sequence ID" value="AAI13316.1"/>
    <property type="molecule type" value="mRNA"/>
</dbReference>
<dbReference type="PIR" id="I46076">
    <property type="entry name" value="I46076"/>
</dbReference>
<dbReference type="RefSeq" id="NP_776853.2">
    <property type="nucleotide sequence ID" value="NM_174428.3"/>
</dbReference>
<dbReference type="RefSeq" id="XP_015325451.1">
    <property type="nucleotide sequence ID" value="XM_015469965.1"/>
</dbReference>
<dbReference type="RefSeq" id="XP_015325452.1">
    <property type="nucleotide sequence ID" value="XM_015469966.1"/>
</dbReference>
<dbReference type="RefSeq" id="XP_024846238.1">
    <property type="nucleotide sequence ID" value="XM_024990470.2"/>
</dbReference>
<dbReference type="SMR" id="P49004"/>
<dbReference type="CORUM" id="P49004"/>
<dbReference type="FunCoup" id="P49004">
    <property type="interactions" value="2837"/>
</dbReference>
<dbReference type="IntAct" id="P49004">
    <property type="interactions" value="1"/>
</dbReference>
<dbReference type="STRING" id="9913.ENSBTAP00000072531"/>
<dbReference type="PaxDb" id="9913-ENSBTAP00000016237"/>
<dbReference type="GeneID" id="281991"/>
<dbReference type="KEGG" id="bta:281991"/>
<dbReference type="CTD" id="5425"/>
<dbReference type="VEuPathDB" id="HostDB:ENSBTAG00000012241"/>
<dbReference type="eggNOG" id="KOG2732">
    <property type="taxonomic scope" value="Eukaryota"/>
</dbReference>
<dbReference type="HOGENOM" id="CLU_021763_0_0_1"/>
<dbReference type="InParanoid" id="P49004"/>
<dbReference type="OrthoDB" id="3763at2759"/>
<dbReference type="TreeFam" id="TF101073"/>
<dbReference type="Reactome" id="R-BTA-110314">
    <property type="pathway name" value="Recognition of DNA damage by PCNA-containing replication complex"/>
</dbReference>
<dbReference type="Reactome" id="R-BTA-174411">
    <property type="pathway name" value="Polymerase switching on the C-strand of the telomere"/>
</dbReference>
<dbReference type="Reactome" id="R-BTA-174414">
    <property type="pathway name" value="Processive synthesis on the C-strand of the telomere"/>
</dbReference>
<dbReference type="Reactome" id="R-BTA-174417">
    <property type="pathway name" value="Telomere C-strand (Lagging Strand) Synthesis"/>
</dbReference>
<dbReference type="Reactome" id="R-BTA-174437">
    <property type="pathway name" value="Removal of the Flap Intermediate from the C-strand"/>
</dbReference>
<dbReference type="Reactome" id="R-BTA-5358565">
    <property type="pathway name" value="Mismatch repair (MMR) directed by MSH2:MSH6 (MutSalpha)"/>
</dbReference>
<dbReference type="Reactome" id="R-BTA-5358606">
    <property type="pathway name" value="Mismatch repair (MMR) directed by MSH2:MSH3 (MutSbeta)"/>
</dbReference>
<dbReference type="Reactome" id="R-BTA-5651801">
    <property type="pathway name" value="PCNA-Dependent Long Patch Base Excision Repair"/>
</dbReference>
<dbReference type="Reactome" id="R-BTA-5656169">
    <property type="pathway name" value="Termination of translesion DNA synthesis"/>
</dbReference>
<dbReference type="Reactome" id="R-BTA-5685942">
    <property type="pathway name" value="HDR through Homologous Recombination (HRR)"/>
</dbReference>
<dbReference type="Reactome" id="R-BTA-5696397">
    <property type="pathway name" value="Gap-filling DNA repair synthesis and ligation in GG-NER"/>
</dbReference>
<dbReference type="Reactome" id="R-BTA-5696400">
    <property type="pathway name" value="Dual Incision in GG-NER"/>
</dbReference>
<dbReference type="Reactome" id="R-BTA-6782135">
    <property type="pathway name" value="Dual incision in TC-NER"/>
</dbReference>
<dbReference type="Reactome" id="R-BTA-6782210">
    <property type="pathway name" value="Gap-filling DNA repair synthesis and ligation in TC-NER"/>
</dbReference>
<dbReference type="Reactome" id="R-BTA-69091">
    <property type="pathway name" value="Polymerase switching"/>
</dbReference>
<dbReference type="Reactome" id="R-BTA-69166">
    <property type="pathway name" value="Removal of the Flap Intermediate"/>
</dbReference>
<dbReference type="Reactome" id="R-BTA-69183">
    <property type="pathway name" value="Processive synthesis on the lagging strand"/>
</dbReference>
<dbReference type="Proteomes" id="UP000009136">
    <property type="component" value="Chromosome 4"/>
</dbReference>
<dbReference type="Bgee" id="ENSBTAG00000012241">
    <property type="expression patterns" value="Expressed in laryngeal cartilage and 106 other cell types or tissues"/>
</dbReference>
<dbReference type="GO" id="GO:0043625">
    <property type="term" value="C:delta DNA polymerase complex"/>
    <property type="evidence" value="ECO:0000314"/>
    <property type="project" value="UniProtKB"/>
</dbReference>
<dbReference type="GO" id="GO:0003677">
    <property type="term" value="F:DNA binding"/>
    <property type="evidence" value="ECO:0007669"/>
    <property type="project" value="InterPro"/>
</dbReference>
<dbReference type="GO" id="GO:0071897">
    <property type="term" value="P:DNA biosynthetic process"/>
    <property type="evidence" value="ECO:0000314"/>
    <property type="project" value="UniProtKB"/>
</dbReference>
<dbReference type="GO" id="GO:0006281">
    <property type="term" value="P:DNA repair"/>
    <property type="evidence" value="ECO:0007669"/>
    <property type="project" value="UniProtKB-KW"/>
</dbReference>
<dbReference type="GO" id="GO:0006271">
    <property type="term" value="P:DNA strand elongation involved in DNA replication"/>
    <property type="evidence" value="ECO:0000318"/>
    <property type="project" value="GO_Central"/>
</dbReference>
<dbReference type="CDD" id="cd07387">
    <property type="entry name" value="MPP_PolD2_C"/>
    <property type="match status" value="1"/>
</dbReference>
<dbReference type="FunFam" id="3.60.21.50:FF:000001">
    <property type="entry name" value="DNA polymerase delta 2, accessory subunit"/>
    <property type="match status" value="1"/>
</dbReference>
<dbReference type="FunFam" id="3.60.21.50:FF:000008">
    <property type="entry name" value="DNA polymerase delta 2, accessory subunit"/>
    <property type="match status" value="1"/>
</dbReference>
<dbReference type="FunFam" id="2.40.50.430:FF:000001">
    <property type="entry name" value="DNA polymerase delta subunit 2"/>
    <property type="match status" value="1"/>
</dbReference>
<dbReference type="Gene3D" id="2.40.50.430">
    <property type="match status" value="1"/>
</dbReference>
<dbReference type="Gene3D" id="3.60.21.50">
    <property type="match status" value="1"/>
</dbReference>
<dbReference type="InterPro" id="IPR007185">
    <property type="entry name" value="DNA_pol_a/d/e_bsu"/>
</dbReference>
<dbReference type="InterPro" id="IPR040663">
    <property type="entry name" value="DNA_pol_D_N"/>
</dbReference>
<dbReference type="InterPro" id="IPR024826">
    <property type="entry name" value="DNA_pol_delta/II_ssu"/>
</dbReference>
<dbReference type="InterPro" id="IPR041863">
    <property type="entry name" value="PolD2_C"/>
</dbReference>
<dbReference type="PANTHER" id="PTHR10416">
    <property type="entry name" value="DNA POLYMERASE DELTA SUBUNIT 2"/>
    <property type="match status" value="1"/>
</dbReference>
<dbReference type="PANTHER" id="PTHR10416:SF0">
    <property type="entry name" value="DNA POLYMERASE DELTA SUBUNIT 2"/>
    <property type="match status" value="1"/>
</dbReference>
<dbReference type="Pfam" id="PF18018">
    <property type="entry name" value="DNA_pol_D_N"/>
    <property type="match status" value="1"/>
</dbReference>
<dbReference type="Pfam" id="PF04042">
    <property type="entry name" value="DNA_pol_E_B"/>
    <property type="match status" value="1"/>
</dbReference>
<proteinExistence type="evidence at protein level"/>
<organism>
    <name type="scientific">Bos taurus</name>
    <name type="common">Bovine</name>
    <dbReference type="NCBI Taxonomy" id="9913"/>
    <lineage>
        <taxon>Eukaryota</taxon>
        <taxon>Metazoa</taxon>
        <taxon>Chordata</taxon>
        <taxon>Craniata</taxon>
        <taxon>Vertebrata</taxon>
        <taxon>Euteleostomi</taxon>
        <taxon>Mammalia</taxon>
        <taxon>Eutheria</taxon>
        <taxon>Laurasiatheria</taxon>
        <taxon>Artiodactyla</taxon>
        <taxon>Ruminantia</taxon>
        <taxon>Pecora</taxon>
        <taxon>Bovidae</taxon>
        <taxon>Bovinae</taxon>
        <taxon>Bos</taxon>
    </lineage>
</organism>
<protein>
    <recommendedName>
        <fullName>DNA polymerase delta subunit 2</fullName>
    </recommendedName>
    <alternativeName>
        <fullName>DNA polymerase delta subunit p50</fullName>
    </alternativeName>
</protein>
<feature type="chain" id="PRO_0000096165" description="DNA polymerase delta subunit 2">
    <location>
        <begin position="1"/>
        <end position="469"/>
    </location>
</feature>
<feature type="modified residue" description="N-acetylmethionine" evidence="1">
    <location>
        <position position="1"/>
    </location>
</feature>
<feature type="modified residue" description="Phosphoserine" evidence="1">
    <location>
        <position position="15"/>
    </location>
</feature>
<feature type="modified residue" description="Phosphoserine" evidence="1">
    <location>
        <position position="257"/>
    </location>
</feature>
<feature type="sequence conflict" description="In Ref. 1; AAC48475." evidence="3" ref="1">
    <original>S</original>
    <variation>T</variation>
    <location>
        <position position="45"/>
    </location>
</feature>
<feature type="sequence conflict" description="In Ref. 1; AAC48475." evidence="3" ref="1">
    <original>L</original>
    <variation>F</variation>
    <location>
        <position position="58"/>
    </location>
</feature>
<feature type="sequence conflict" description="In Ref. 1; AAC48475." evidence="3" ref="1">
    <original>F</original>
    <variation>S</variation>
    <location>
        <position position="387"/>
    </location>
</feature>
<feature type="sequence conflict" description="In Ref. 1; AAC48475." evidence="3" ref="1">
    <original>R</original>
    <variation>G</variation>
    <location>
        <position position="443"/>
    </location>
</feature>
<evidence type="ECO:0000250" key="1">
    <source>
        <dbReference type="UniProtKB" id="P49005"/>
    </source>
</evidence>
<evidence type="ECO:0000250" key="2">
    <source>
        <dbReference type="UniProtKB" id="Q6AXY4"/>
    </source>
</evidence>
<evidence type="ECO:0000305" key="3"/>
<evidence type="ECO:0000305" key="4">
    <source>
    </source>
</evidence>